<proteinExistence type="inferred from homology"/>
<organism>
    <name type="scientific">Catharanthus roseus</name>
    <name type="common">Madagascar periwinkle</name>
    <name type="synonym">Vinca rosea</name>
    <dbReference type="NCBI Taxonomy" id="4058"/>
    <lineage>
        <taxon>Eukaryota</taxon>
        <taxon>Viridiplantae</taxon>
        <taxon>Streptophyta</taxon>
        <taxon>Embryophyta</taxon>
        <taxon>Tracheophyta</taxon>
        <taxon>Spermatophyta</taxon>
        <taxon>Magnoliopsida</taxon>
        <taxon>eudicotyledons</taxon>
        <taxon>Gunneridae</taxon>
        <taxon>Pentapetalae</taxon>
        <taxon>asterids</taxon>
        <taxon>lamiids</taxon>
        <taxon>Gentianales</taxon>
        <taxon>Apocynaceae</taxon>
        <taxon>Rauvolfioideae</taxon>
        <taxon>Vinceae</taxon>
        <taxon>Catharanthinae</taxon>
        <taxon>Catharanthus</taxon>
    </lineage>
</organism>
<feature type="transit peptide" description="Chloroplast" evidence="4">
    <location>
        <begin position="1"/>
        <end position="40"/>
    </location>
</feature>
<feature type="chain" id="PRO_0000016473" description="Geranylgeranyl pyrophosphate synthase, chloroplastic">
    <location>
        <begin position="41"/>
        <end position="357"/>
    </location>
</feature>
<feature type="binding site" evidence="2">
    <location>
        <position position="106"/>
    </location>
    <ligand>
        <name>isopentenyl diphosphate</name>
        <dbReference type="ChEBI" id="CHEBI:128769"/>
    </ligand>
</feature>
<feature type="binding site" evidence="2">
    <location>
        <position position="109"/>
    </location>
    <ligand>
        <name>isopentenyl diphosphate</name>
        <dbReference type="ChEBI" id="CHEBI:128769"/>
    </ligand>
</feature>
<feature type="binding site" evidence="3">
    <location>
        <position position="138"/>
    </location>
    <ligand>
        <name>isopentenyl diphosphate</name>
        <dbReference type="ChEBI" id="CHEBI:128769"/>
    </ligand>
</feature>
<feature type="binding site" evidence="2">
    <location>
        <position position="145"/>
    </location>
    <ligand>
        <name>Mg(2+)</name>
        <dbReference type="ChEBI" id="CHEBI:18420"/>
        <label>1</label>
    </ligand>
</feature>
<feature type="binding site" evidence="2">
    <location>
        <position position="145"/>
    </location>
    <ligand>
        <name>Mg(2+)</name>
        <dbReference type="ChEBI" id="CHEBI:18420"/>
        <label>2</label>
    </ligand>
</feature>
<feature type="binding site" evidence="2">
    <location>
        <position position="151"/>
    </location>
    <ligand>
        <name>Mg(2+)</name>
        <dbReference type="ChEBI" id="CHEBI:18420"/>
        <label>1</label>
    </ligand>
</feature>
<feature type="binding site" evidence="2">
    <location>
        <position position="151"/>
    </location>
    <ligand>
        <name>Mg(2+)</name>
        <dbReference type="ChEBI" id="CHEBI:18420"/>
        <label>2</label>
    </ligand>
</feature>
<feature type="binding site" evidence="1">
    <location>
        <position position="156"/>
    </location>
    <ligand>
        <name>dimethylallyl diphosphate</name>
        <dbReference type="ChEBI" id="CHEBI:57623"/>
    </ligand>
</feature>
<feature type="binding site" evidence="2">
    <location>
        <position position="157"/>
    </location>
    <ligand>
        <name>isopentenyl diphosphate</name>
        <dbReference type="ChEBI" id="CHEBI:128769"/>
    </ligand>
</feature>
<feature type="binding site" evidence="1">
    <location>
        <position position="242"/>
    </location>
    <ligand>
        <name>dimethylallyl diphosphate</name>
        <dbReference type="ChEBI" id="CHEBI:57623"/>
    </ligand>
</feature>
<feature type="binding site" evidence="1">
    <location>
        <position position="243"/>
    </location>
    <ligand>
        <name>dimethylallyl diphosphate</name>
        <dbReference type="ChEBI" id="CHEBI:57623"/>
    </ligand>
</feature>
<feature type="binding site" evidence="1">
    <location>
        <position position="280"/>
    </location>
    <ligand>
        <name>dimethylallyl diphosphate</name>
        <dbReference type="ChEBI" id="CHEBI:57623"/>
    </ligand>
</feature>
<feature type="binding site" evidence="1">
    <location>
        <position position="297"/>
    </location>
    <ligand>
        <name>dimethylallyl diphosphate</name>
        <dbReference type="ChEBI" id="CHEBI:57623"/>
    </ligand>
</feature>
<feature type="binding site" evidence="1">
    <location>
        <position position="307"/>
    </location>
    <ligand>
        <name>dimethylallyl diphosphate</name>
        <dbReference type="ChEBI" id="CHEBI:57623"/>
    </ligand>
</feature>
<accession>Q42698</accession>
<comment type="function">
    <text>Catalyzes the trans-addition of the three molecules of IPP onto DMAPP to form geranylgeranyl pyrophosphate.</text>
</comment>
<comment type="catalytic activity">
    <reaction>
        <text>isopentenyl diphosphate + dimethylallyl diphosphate = (2E)-geranyl diphosphate + diphosphate</text>
        <dbReference type="Rhea" id="RHEA:22408"/>
        <dbReference type="ChEBI" id="CHEBI:33019"/>
        <dbReference type="ChEBI" id="CHEBI:57623"/>
        <dbReference type="ChEBI" id="CHEBI:58057"/>
        <dbReference type="ChEBI" id="CHEBI:128769"/>
        <dbReference type="EC" id="2.5.1.1"/>
    </reaction>
</comment>
<comment type="catalytic activity">
    <reaction>
        <text>isopentenyl diphosphate + (2E)-geranyl diphosphate = (2E,6E)-farnesyl diphosphate + diphosphate</text>
        <dbReference type="Rhea" id="RHEA:19361"/>
        <dbReference type="ChEBI" id="CHEBI:33019"/>
        <dbReference type="ChEBI" id="CHEBI:58057"/>
        <dbReference type="ChEBI" id="CHEBI:128769"/>
        <dbReference type="ChEBI" id="CHEBI:175763"/>
        <dbReference type="EC" id="2.5.1.10"/>
    </reaction>
</comment>
<comment type="catalytic activity">
    <reaction>
        <text>isopentenyl diphosphate + (2E,6E)-farnesyl diphosphate = (2E,6E,10E)-geranylgeranyl diphosphate + diphosphate</text>
        <dbReference type="Rhea" id="RHEA:17653"/>
        <dbReference type="ChEBI" id="CHEBI:33019"/>
        <dbReference type="ChEBI" id="CHEBI:58756"/>
        <dbReference type="ChEBI" id="CHEBI:128769"/>
        <dbReference type="ChEBI" id="CHEBI:175763"/>
        <dbReference type="EC" id="2.5.1.29"/>
    </reaction>
</comment>
<comment type="cofactor">
    <cofactor evidence="1">
        <name>Mg(2+)</name>
        <dbReference type="ChEBI" id="CHEBI:18420"/>
    </cofactor>
    <text evidence="1">Binds 2 Mg(2+) ions per subunit.</text>
</comment>
<comment type="pathway">
    <text>Isoprenoid biosynthesis; farnesyl diphosphate biosynthesis; farnesyl diphosphate from geranyl diphosphate and isopentenyl diphosphate: step 1/1.</text>
</comment>
<comment type="pathway">
    <text>Isoprenoid biosynthesis; geranyl diphosphate biosynthesis; geranyl diphosphate from dimethylallyl diphosphate and isopentenyl diphosphate: step 1/1.</text>
</comment>
<comment type="pathway">
    <text>Isoprenoid biosynthesis; geranylgeranyl diphosphate biosynthesis; geranylgeranyl diphosphate from farnesyl diphosphate and isopentenyl diphosphate: step 1/1.</text>
</comment>
<comment type="subcellular location">
    <subcellularLocation>
        <location>Plastid</location>
        <location>Chloroplast</location>
    </subcellularLocation>
</comment>
<comment type="similarity">
    <text evidence="5">Belongs to the FPP/GGPP synthase family.</text>
</comment>
<sequence>MRSNLCHPLKNQLPISFFLSGTIRKPIFSCSRLSISAIITKEQTQEESESKSKKEVAFSSSSSFDFKAYMIGKANSVNKALEDAVLVREPLKIHESMRYSLLAGGKRVRPMLCIAACELFGGTESVAMPSACAVEMIHTMSLMHDDLPCMDNDDLRRGKPTNHKVFGEDVAVLAGDALLAFAFEHIATATKGVSSERIVRVVGELAKCIGSEGLVAGQVVDVCSEGIADVGLEHLEFIHIHKTAALLEGSVVLGAIVGGANDEQISKLRKFARCIGLLFQVVDDILDVTKSSQELGKTAGKDLVADKVTYPKLLGIDKSREFAEKLNREAQEQLAEFDPEKAAPLIALANYIAYRDN</sequence>
<name>GGPPS_CATRO</name>
<reference key="1">
    <citation type="online journal article" date="1995" name="Plant Gene Register">
        <title>Nucleotide sequence of a Catharanthus roseus geranylgeranyl pyrophosphate synthase gene.</title>
        <authorList>
            <person name="Bantignies B."/>
            <person name="Liboz T."/>
            <person name="Ambid C."/>
        </authorList>
        <locator>PGR95-119</locator>
    </citation>
    <scope>NUCLEOTIDE SEQUENCE [GENOMIC DNA]</scope>
    <source>
        <strain>cv. G. Don c20</strain>
    </source>
</reference>
<gene>
    <name type="primary">GGPS1</name>
    <name type="synonym">GGC1</name>
</gene>
<dbReference type="EC" id="2.5.1.-"/>
<dbReference type="EC" id="2.5.1.1"/>
<dbReference type="EC" id="2.5.1.29"/>
<dbReference type="EC" id="2.5.1.10"/>
<dbReference type="EMBL" id="X92893">
    <property type="protein sequence ID" value="CAA63486.1"/>
    <property type="molecule type" value="Genomic_DNA"/>
</dbReference>
<dbReference type="PIR" id="T09966">
    <property type="entry name" value="T09966"/>
</dbReference>
<dbReference type="SMR" id="Q42698"/>
<dbReference type="BRENDA" id="2.5.1.10">
    <property type="organism ID" value="1211"/>
</dbReference>
<dbReference type="BRENDA" id="2.5.1.29">
    <property type="organism ID" value="1211"/>
</dbReference>
<dbReference type="UniPathway" id="UPA00259">
    <property type="reaction ID" value="UER00368"/>
</dbReference>
<dbReference type="UniPathway" id="UPA00260">
    <property type="reaction ID" value="UER00369"/>
</dbReference>
<dbReference type="UniPathway" id="UPA00389">
    <property type="reaction ID" value="UER00564"/>
</dbReference>
<dbReference type="GO" id="GO:0009507">
    <property type="term" value="C:chloroplast"/>
    <property type="evidence" value="ECO:0007669"/>
    <property type="project" value="UniProtKB-SubCell"/>
</dbReference>
<dbReference type="GO" id="GO:0004337">
    <property type="term" value="F:(2E,6E)-farnesyl diphosphate synthase activity"/>
    <property type="evidence" value="ECO:0007669"/>
    <property type="project" value="UniProtKB-EC"/>
</dbReference>
<dbReference type="GO" id="GO:0004161">
    <property type="term" value="F:dimethylallyltranstransferase activity"/>
    <property type="evidence" value="ECO:0007669"/>
    <property type="project" value="UniProtKB-EC"/>
</dbReference>
<dbReference type="GO" id="GO:0004311">
    <property type="term" value="F:geranylgeranyl diphosphate synthase activity"/>
    <property type="evidence" value="ECO:0007669"/>
    <property type="project" value="UniProtKB-EC"/>
</dbReference>
<dbReference type="GO" id="GO:0046872">
    <property type="term" value="F:metal ion binding"/>
    <property type="evidence" value="ECO:0007669"/>
    <property type="project" value="UniProtKB-KW"/>
</dbReference>
<dbReference type="GO" id="GO:0016117">
    <property type="term" value="P:carotenoid biosynthetic process"/>
    <property type="evidence" value="ECO:0007669"/>
    <property type="project" value="UniProtKB-KW"/>
</dbReference>
<dbReference type="GO" id="GO:0045337">
    <property type="term" value="P:farnesyl diphosphate biosynthetic process"/>
    <property type="evidence" value="ECO:0007669"/>
    <property type="project" value="UniProtKB-UniPathway"/>
</dbReference>
<dbReference type="GO" id="GO:0033384">
    <property type="term" value="P:geranyl diphosphate biosynthetic process"/>
    <property type="evidence" value="ECO:0007669"/>
    <property type="project" value="UniProtKB-UniPathway"/>
</dbReference>
<dbReference type="GO" id="GO:0033386">
    <property type="term" value="P:geranylgeranyl diphosphate biosynthetic process"/>
    <property type="evidence" value="ECO:0007669"/>
    <property type="project" value="UniProtKB-UniPathway"/>
</dbReference>
<dbReference type="CDD" id="cd00685">
    <property type="entry name" value="Trans_IPPS_HT"/>
    <property type="match status" value="1"/>
</dbReference>
<dbReference type="FunFam" id="1.10.600.10:FF:000001">
    <property type="entry name" value="Geranylgeranyl diphosphate synthase"/>
    <property type="match status" value="1"/>
</dbReference>
<dbReference type="Gene3D" id="1.10.600.10">
    <property type="entry name" value="Farnesyl Diphosphate Synthase"/>
    <property type="match status" value="1"/>
</dbReference>
<dbReference type="InterPro" id="IPR008949">
    <property type="entry name" value="Isoprenoid_synthase_dom_sf"/>
</dbReference>
<dbReference type="InterPro" id="IPR000092">
    <property type="entry name" value="Polyprenyl_synt"/>
</dbReference>
<dbReference type="InterPro" id="IPR033749">
    <property type="entry name" value="Polyprenyl_synt_CS"/>
</dbReference>
<dbReference type="InterPro" id="IPR053378">
    <property type="entry name" value="Prenyl_diphosphate_synthase"/>
</dbReference>
<dbReference type="NCBIfam" id="NF045485">
    <property type="entry name" value="FPPsyn"/>
    <property type="match status" value="1"/>
</dbReference>
<dbReference type="PANTHER" id="PTHR43281">
    <property type="entry name" value="FARNESYL DIPHOSPHATE SYNTHASE"/>
    <property type="match status" value="1"/>
</dbReference>
<dbReference type="PANTHER" id="PTHR43281:SF24">
    <property type="entry name" value="OS07G0580900 PROTEIN"/>
    <property type="match status" value="1"/>
</dbReference>
<dbReference type="Pfam" id="PF00348">
    <property type="entry name" value="polyprenyl_synt"/>
    <property type="match status" value="1"/>
</dbReference>
<dbReference type="SFLD" id="SFLDS00005">
    <property type="entry name" value="Isoprenoid_Synthase_Type_I"/>
    <property type="match status" value="1"/>
</dbReference>
<dbReference type="SFLD" id="SFLDG01017">
    <property type="entry name" value="Polyprenyl_Transferase_Like"/>
    <property type="match status" value="1"/>
</dbReference>
<dbReference type="SUPFAM" id="SSF48576">
    <property type="entry name" value="Terpenoid synthases"/>
    <property type="match status" value="1"/>
</dbReference>
<dbReference type="PROSITE" id="PS00723">
    <property type="entry name" value="POLYPRENYL_SYNTHASE_1"/>
    <property type="match status" value="1"/>
</dbReference>
<dbReference type="PROSITE" id="PS00444">
    <property type="entry name" value="POLYPRENYL_SYNTHASE_2"/>
    <property type="match status" value="1"/>
</dbReference>
<protein>
    <recommendedName>
        <fullName>Geranylgeranyl pyrophosphate synthase, chloroplastic</fullName>
        <shortName>GGPP synthase</shortName>
        <shortName>GGPS</shortName>
        <ecNumber>2.5.1.-</ecNumber>
    </recommendedName>
    <alternativeName>
        <fullName>(2E,6E)-farnesyl diphosphate synthase</fullName>
    </alternativeName>
    <alternativeName>
        <fullName>Dimethylallyltranstransferase</fullName>
        <ecNumber>2.5.1.1</ecNumber>
    </alternativeName>
    <alternativeName>
        <fullName>Farnesyl diphosphate synthase</fullName>
    </alternativeName>
    <alternativeName>
        <fullName>Farnesyltranstransferase</fullName>
        <ecNumber>2.5.1.29</ecNumber>
    </alternativeName>
    <alternativeName>
        <fullName>Geranyltranstransferase</fullName>
        <ecNumber>2.5.1.10</ecNumber>
    </alternativeName>
</protein>
<keyword id="KW-0125">Carotenoid biosynthesis</keyword>
<keyword id="KW-0150">Chloroplast</keyword>
<keyword id="KW-0414">Isoprene biosynthesis</keyword>
<keyword id="KW-0460">Magnesium</keyword>
<keyword id="KW-0479">Metal-binding</keyword>
<keyword id="KW-0934">Plastid</keyword>
<keyword id="KW-0808">Transferase</keyword>
<keyword id="KW-0809">Transit peptide</keyword>
<evidence type="ECO:0000250" key="1"/>
<evidence type="ECO:0000250" key="2">
    <source>
        <dbReference type="UniProtKB" id="P14324"/>
    </source>
</evidence>
<evidence type="ECO:0000250" key="3">
    <source>
        <dbReference type="UniProtKB" id="Q12051"/>
    </source>
</evidence>
<evidence type="ECO:0000255" key="4"/>
<evidence type="ECO:0000305" key="5"/>